<keyword id="KW-0687">Ribonucleoprotein</keyword>
<keyword id="KW-0689">Ribosomal protein</keyword>
<keyword id="KW-0694">RNA-binding</keyword>
<keyword id="KW-0699">rRNA-binding</keyword>
<name>RS15_ACIB3</name>
<reference key="1">
    <citation type="journal article" date="2008" name="J. Bacteriol.">
        <title>Comparative genome sequence analysis of multidrug-resistant Acinetobacter baumannii.</title>
        <authorList>
            <person name="Adams M.D."/>
            <person name="Goglin K."/>
            <person name="Molyneaux N."/>
            <person name="Hujer K.M."/>
            <person name="Lavender H."/>
            <person name="Jamison J.J."/>
            <person name="MacDonald I.J."/>
            <person name="Martin K.M."/>
            <person name="Russo T."/>
            <person name="Campagnari A.A."/>
            <person name="Hujer A.M."/>
            <person name="Bonomo R.A."/>
            <person name="Gill S.R."/>
        </authorList>
    </citation>
    <scope>NUCLEOTIDE SEQUENCE [LARGE SCALE GENOMIC DNA]</scope>
    <source>
        <strain>AB307-0294</strain>
    </source>
</reference>
<dbReference type="EMBL" id="CP001172">
    <property type="protein sequence ID" value="ACJ57193.1"/>
    <property type="molecule type" value="Genomic_DNA"/>
</dbReference>
<dbReference type="RefSeq" id="WP_001229357.1">
    <property type="nucleotide sequence ID" value="NZ_CP001172.1"/>
</dbReference>
<dbReference type="SMR" id="B7H0Z2"/>
<dbReference type="GeneID" id="92892353"/>
<dbReference type="HOGENOM" id="CLU_148518_0_0_6"/>
<dbReference type="Proteomes" id="UP000006924">
    <property type="component" value="Chromosome"/>
</dbReference>
<dbReference type="GO" id="GO:0022627">
    <property type="term" value="C:cytosolic small ribosomal subunit"/>
    <property type="evidence" value="ECO:0007669"/>
    <property type="project" value="TreeGrafter"/>
</dbReference>
<dbReference type="GO" id="GO:0019843">
    <property type="term" value="F:rRNA binding"/>
    <property type="evidence" value="ECO:0007669"/>
    <property type="project" value="UniProtKB-UniRule"/>
</dbReference>
<dbReference type="GO" id="GO:0003735">
    <property type="term" value="F:structural constituent of ribosome"/>
    <property type="evidence" value="ECO:0007669"/>
    <property type="project" value="InterPro"/>
</dbReference>
<dbReference type="GO" id="GO:0006412">
    <property type="term" value="P:translation"/>
    <property type="evidence" value="ECO:0007669"/>
    <property type="project" value="UniProtKB-UniRule"/>
</dbReference>
<dbReference type="CDD" id="cd00353">
    <property type="entry name" value="Ribosomal_S15p_S13e"/>
    <property type="match status" value="1"/>
</dbReference>
<dbReference type="FunFam" id="1.10.287.10:FF:000002">
    <property type="entry name" value="30S ribosomal protein S15"/>
    <property type="match status" value="1"/>
</dbReference>
<dbReference type="Gene3D" id="6.10.250.3130">
    <property type="match status" value="1"/>
</dbReference>
<dbReference type="Gene3D" id="1.10.287.10">
    <property type="entry name" value="S15/NS1, RNA-binding"/>
    <property type="match status" value="1"/>
</dbReference>
<dbReference type="HAMAP" id="MF_01343_B">
    <property type="entry name" value="Ribosomal_uS15_B"/>
    <property type="match status" value="1"/>
</dbReference>
<dbReference type="InterPro" id="IPR000589">
    <property type="entry name" value="Ribosomal_uS15"/>
</dbReference>
<dbReference type="InterPro" id="IPR005290">
    <property type="entry name" value="Ribosomal_uS15_bac-type"/>
</dbReference>
<dbReference type="InterPro" id="IPR009068">
    <property type="entry name" value="uS15_NS1_RNA-bd_sf"/>
</dbReference>
<dbReference type="NCBIfam" id="TIGR00952">
    <property type="entry name" value="S15_bact"/>
    <property type="match status" value="1"/>
</dbReference>
<dbReference type="PANTHER" id="PTHR23321">
    <property type="entry name" value="RIBOSOMAL PROTEIN S15, BACTERIAL AND ORGANELLAR"/>
    <property type="match status" value="1"/>
</dbReference>
<dbReference type="PANTHER" id="PTHR23321:SF26">
    <property type="entry name" value="SMALL RIBOSOMAL SUBUNIT PROTEIN US15M"/>
    <property type="match status" value="1"/>
</dbReference>
<dbReference type="Pfam" id="PF00312">
    <property type="entry name" value="Ribosomal_S15"/>
    <property type="match status" value="1"/>
</dbReference>
<dbReference type="SMART" id="SM01387">
    <property type="entry name" value="Ribosomal_S15"/>
    <property type="match status" value="1"/>
</dbReference>
<dbReference type="SUPFAM" id="SSF47060">
    <property type="entry name" value="S15/NS1 RNA-binding domain"/>
    <property type="match status" value="1"/>
</dbReference>
<dbReference type="PROSITE" id="PS00362">
    <property type="entry name" value="RIBOSOMAL_S15"/>
    <property type="match status" value="1"/>
</dbReference>
<proteinExistence type="inferred from homology"/>
<evidence type="ECO:0000255" key="1">
    <source>
        <dbReference type="HAMAP-Rule" id="MF_01343"/>
    </source>
</evidence>
<evidence type="ECO:0000305" key="2"/>
<comment type="function">
    <text evidence="1">One of the primary rRNA binding proteins, it binds directly to 16S rRNA where it helps nucleate assembly of the platform of the 30S subunit by binding and bridging several RNA helices of the 16S rRNA.</text>
</comment>
<comment type="function">
    <text evidence="1">Forms an intersubunit bridge (bridge B4) with the 23S rRNA of the 50S subunit in the ribosome.</text>
</comment>
<comment type="subunit">
    <text evidence="1">Part of the 30S ribosomal subunit. Forms a bridge to the 50S subunit in the 70S ribosome, contacting the 23S rRNA.</text>
</comment>
<comment type="similarity">
    <text evidence="1">Belongs to the universal ribosomal protein uS15 family.</text>
</comment>
<organism>
    <name type="scientific">Acinetobacter baumannii (strain AB307-0294)</name>
    <dbReference type="NCBI Taxonomy" id="557600"/>
    <lineage>
        <taxon>Bacteria</taxon>
        <taxon>Pseudomonadati</taxon>
        <taxon>Pseudomonadota</taxon>
        <taxon>Gammaproteobacteria</taxon>
        <taxon>Moraxellales</taxon>
        <taxon>Moraxellaceae</taxon>
        <taxon>Acinetobacter</taxon>
        <taxon>Acinetobacter calcoaceticus/baumannii complex</taxon>
    </lineage>
</organism>
<protein>
    <recommendedName>
        <fullName evidence="1">Small ribosomal subunit protein uS15</fullName>
    </recommendedName>
    <alternativeName>
        <fullName evidence="2">30S ribosomal protein S15</fullName>
    </alternativeName>
</protein>
<accession>B7H0Z2</accession>
<sequence>MALTNADRAEIIAKFARAENDTGSPEVQVALLTAQINDLQGHFKAHKHDHHSRRGLIRMVNQRRKLLDYLNGKDHERYTALIGALGLRR</sequence>
<feature type="chain" id="PRO_1000143058" description="Small ribosomal subunit protein uS15">
    <location>
        <begin position="1"/>
        <end position="89"/>
    </location>
</feature>
<gene>
    <name evidence="1" type="primary">rpsO</name>
    <name type="ordered locus">ABBFA_003176</name>
</gene>